<evidence type="ECO:0000250" key="1"/>
<evidence type="ECO:0000255" key="2"/>
<evidence type="ECO:0000303" key="3">
    <source>
    </source>
</evidence>
<evidence type="ECO:0000305" key="4"/>
<organism>
    <name type="scientific">Trittame loki</name>
    <name type="common">Brush-footed trapdoor spider</name>
    <dbReference type="NCBI Taxonomy" id="1295018"/>
    <lineage>
        <taxon>Eukaryota</taxon>
        <taxon>Metazoa</taxon>
        <taxon>Ecdysozoa</taxon>
        <taxon>Arthropoda</taxon>
        <taxon>Chelicerata</taxon>
        <taxon>Arachnida</taxon>
        <taxon>Araneae</taxon>
        <taxon>Mygalomorphae</taxon>
        <taxon>Barychelidae</taxon>
        <taxon>Trittame</taxon>
    </lineage>
</organism>
<name>ICK39_TRILK</name>
<sequence length="114" mass="12917">MKTIIVFLSLLVLATKFGDANEGVNQEQMKEVIQNEFREDFLNEMAPMSLLQQLEAIESTLLEKEADRNSRQKRCLGENVPCGDFPCCGKLVCQKTFGYGWLYKSPYCVKPSNG</sequence>
<accession>W4VSA2</accession>
<proteinExistence type="evidence at transcript level"/>
<dbReference type="EMBL" id="GAQE01000042">
    <property type="protein sequence ID" value="JAB84512.1"/>
    <property type="molecule type" value="Transcribed_RNA"/>
</dbReference>
<dbReference type="SMR" id="W4VSA2"/>
<dbReference type="ArachnoServer" id="AS001527">
    <property type="toxin name" value="U17-barytoxin-Tl1a"/>
</dbReference>
<dbReference type="GO" id="GO:0005576">
    <property type="term" value="C:extracellular region"/>
    <property type="evidence" value="ECO:0007669"/>
    <property type="project" value="UniProtKB-SubCell"/>
</dbReference>
<dbReference type="GO" id="GO:0019871">
    <property type="term" value="F:sodium channel inhibitor activity"/>
    <property type="evidence" value="ECO:0007669"/>
    <property type="project" value="InterPro"/>
</dbReference>
<dbReference type="GO" id="GO:0090729">
    <property type="term" value="F:toxin activity"/>
    <property type="evidence" value="ECO:0007669"/>
    <property type="project" value="UniProtKB-KW"/>
</dbReference>
<dbReference type="InterPro" id="IPR012627">
    <property type="entry name" value="Toxin_22"/>
</dbReference>
<dbReference type="Pfam" id="PF08092">
    <property type="entry name" value="Toxin_22"/>
    <property type="match status" value="1"/>
</dbReference>
<reference key="1">
    <citation type="journal article" date="2013" name="Toxins">
        <title>A proteomics and transcriptomics investigation of the venom from the barychelid spider Trittame loki (brush-foot trapdoor).</title>
        <authorList>
            <person name="Undheim E.A."/>
            <person name="Sunagar K."/>
            <person name="Herzig V."/>
            <person name="Kely L."/>
            <person name="Low D.H."/>
            <person name="Jackson T.N."/>
            <person name="Jones A."/>
            <person name="Kurniawan N."/>
            <person name="King G.F."/>
            <person name="Ali S.A."/>
            <person name="Antunes A."/>
            <person name="Ruder T."/>
            <person name="Fry B.G."/>
        </authorList>
    </citation>
    <scope>NUCLEOTIDE SEQUENCE [MRNA]</scope>
    <source>
        <tissue>Venom gland</tissue>
    </source>
</reference>
<comment type="function">
    <text evidence="4">Ion channel inhibitor.</text>
</comment>
<comment type="subcellular location">
    <subcellularLocation>
        <location evidence="1">Secreted</location>
    </subcellularLocation>
</comment>
<comment type="tissue specificity">
    <text>Expressed by the venom gland.</text>
</comment>
<comment type="domain">
    <text evidence="1">The presence of a 'disulfide through disulfide knot' structurally defines this protein as a knottin.</text>
</comment>
<comment type="similarity">
    <text evidence="4">Belongs to the neurotoxin 14 (magi-1) family. 03 (ICK-30-40) subfamily.</text>
</comment>
<protein>
    <recommendedName>
        <fullName>U17-barytoxin-Tl1a</fullName>
        <shortName>U17-BATX-Tl1a</shortName>
    </recommendedName>
    <alternativeName>
        <fullName evidence="3">Toxin ICK-39</fullName>
    </alternativeName>
</protein>
<feature type="signal peptide" evidence="2">
    <location>
        <begin position="1"/>
        <end position="20"/>
    </location>
</feature>
<feature type="propeptide" id="PRO_0000435162" evidence="4">
    <location>
        <begin position="21"/>
        <end position="74"/>
    </location>
</feature>
<feature type="chain" id="PRO_0000429246" description="U17-barytoxin-Tl1a">
    <location>
        <begin position="75"/>
        <end position="114"/>
    </location>
</feature>
<feature type="disulfide bond" evidence="1">
    <location>
        <begin position="75"/>
        <end position="88"/>
    </location>
</feature>
<feature type="disulfide bond" evidence="1">
    <location>
        <begin position="82"/>
        <end position="93"/>
    </location>
</feature>
<feature type="disulfide bond" evidence="1">
    <location>
        <begin position="87"/>
        <end position="108"/>
    </location>
</feature>
<keyword id="KW-0165">Cleavage on pair of basic residues</keyword>
<keyword id="KW-1015">Disulfide bond</keyword>
<keyword id="KW-0872">Ion channel impairing toxin</keyword>
<keyword id="KW-0960">Knottin</keyword>
<keyword id="KW-0964">Secreted</keyword>
<keyword id="KW-0732">Signal</keyword>
<keyword id="KW-0800">Toxin</keyword>